<accession>L7WU80</accession>
<feature type="chain" id="PRO_0000448812" description="Nonribisomal peptide synthetase notE'">
    <location>
        <begin position="1"/>
        <end position="2225"/>
    </location>
</feature>
<feature type="domain" description="Carrier 1" evidence="3 10">
    <location>
        <begin position="614"/>
        <end position="690"/>
    </location>
</feature>
<feature type="domain" description="Carrier 2" evidence="3 10">
    <location>
        <begin position="1699"/>
        <end position="1775"/>
    </location>
</feature>
<feature type="region of interest" description="Disordered" evidence="4">
    <location>
        <begin position="24"/>
        <end position="59"/>
    </location>
</feature>
<feature type="region of interest" description="Adenylation 1" evidence="2 10">
    <location>
        <begin position="83"/>
        <end position="482"/>
    </location>
</feature>
<feature type="region of interest" description="Condensation 1" evidence="2 10">
    <location>
        <begin position="730"/>
        <end position="1142"/>
    </location>
</feature>
<feature type="region of interest" description="Adenylation 2" evidence="2 10">
    <location>
        <begin position="1164"/>
        <end position="1563"/>
    </location>
</feature>
<feature type="region of interest" description="Condensation 2" evidence="2 10">
    <location>
        <begin position="1827"/>
        <end position="2138"/>
    </location>
</feature>
<feature type="compositionally biased region" description="Low complexity" evidence="4">
    <location>
        <begin position="28"/>
        <end position="49"/>
    </location>
</feature>
<feature type="modified residue" description="O-(pantetheine 4'-phosphoryl)serine" evidence="3">
    <location>
        <position position="651"/>
    </location>
</feature>
<feature type="modified residue" description="O-(pantetheine 4'-phosphoryl)serine" evidence="3">
    <location>
        <position position="1736"/>
    </location>
</feature>
<keyword id="KW-0017">Alkaloid metabolism</keyword>
<keyword id="KW-0436">Ligase</keyword>
<keyword id="KW-0596">Phosphopantetheine</keyword>
<keyword id="KW-0597">Phosphoprotein</keyword>
<keyword id="KW-0677">Repeat</keyword>
<comment type="function">
    <text evidence="6 7 10">Nonribisomal peptide synthetase; part of the gene cluster that mediates the biosynthesis of notoamide, a fungal indole alkaloid that belongs to a family of natural products containing a characteristic bicyclo[2.2.2]diazaoctane core (PubMed:23213353). The first step of notoamide biosynthesis involves coupling of L-proline and L-tryptophan by the bimodular NRPS notE', to produce cyclo-L-tryptophan-L-proline called brevianamide F (Probable). The reverse prenyltransferase notF' then acts as a deoxybrevianamide E synthase and converts brevianamide F to deoxybrevianamide E via reverse prenylation at C-2 of the indole ring leading to the bicyclo[2.2.2]diazaoctane core (Probable) (PubMed:22660767). Deoxybrevianamide E is further hydroxylated at C-6 of the indole ring, likely catalyzed by the cytochrome P450 monooxygenase notG', to yield 6-hydroxy-deoxybrevianamide E (Probable). 6-hydroxy-deoxybrevianamide E is a specific substrate of the prenyltransferase notC' for normal prenylation at C-7 to produce 6-hydroxy-7-prenyl-deoxybrevianamide, also called notoamide S (Probable). As the proposed pivotal branching point in notoamide biosynthesis, notoamide S can be diverted to notoamide E through an oxidative pyran ring closure putatively catalyzed by either notH' cytochrome P450 monooxygenase or the notD' FAD-linked oxidoreductase (Probable). This step would be followed by an indole 2,3-epoxidation-initiated pinacol-like rearrangement catalyzed by the notB' FAD-dependent monooxygenase leading to the formation of notoamide C and notoamide D (Probable). On the other hand notoamide S is converted to notoamide T by notH' (or notD'), a bifunctional oxidase that also functions as the intramolecular Diels-Alderase responsible for generation of (-)-notoamide T (Probable). To generate antipodal (+)-notoaminide T, notH (or notD) in Aspergillus strain MF297-2 is expected to catalyze a Diels-Alder reaction leading to the opposite stereochemistry (Probable). The remaining oxidoreductase notD' (or notH') likely catalyzes the oxidative pyran ring formation to yield (-)-stephacidin A (Probable). The FAD-dependent monooxygenase notI' is highly similar to notB' and is predicted to catalyze a similar conversion from (-)-stephacidin A to (+)-notoamide B via the 2,3-epoxidation of (-)-stephacidin A followed by a pinacol-type rearrangement (Probable). Finally, it remains unclear which enzyme could be responsible for the final hydroxylation steps leading to notoamide A and sclerotiamide (Probable).</text>
</comment>
<comment type="catalytic activity">
    <reaction evidence="10">
        <text>L-proline + L-tryptophan + 2 ATP = brevianamide F + 2 AMP + 2 diphosphate + 2 H(+)</text>
        <dbReference type="Rhea" id="RHEA:35935"/>
        <dbReference type="ChEBI" id="CHEBI:15378"/>
        <dbReference type="ChEBI" id="CHEBI:30616"/>
        <dbReference type="ChEBI" id="CHEBI:33019"/>
        <dbReference type="ChEBI" id="CHEBI:57912"/>
        <dbReference type="ChEBI" id="CHEBI:60039"/>
        <dbReference type="ChEBI" id="CHEBI:64530"/>
        <dbReference type="ChEBI" id="CHEBI:456215"/>
    </reaction>
    <physiologicalReaction direction="left-to-right" evidence="10">
        <dbReference type="Rhea" id="RHEA:35936"/>
    </physiologicalReaction>
</comment>
<comment type="pathway">
    <text evidence="10">Alkaloid biosynthesis.</text>
</comment>
<comment type="domain">
    <text evidence="1 10">NRP synthetases are composed of discrete domains (adenylation (A), thiolation (T) or peptidyl carrier protein (PCP) and condensation (C) domains) which when grouped together are referred to as a single module. Each module is responsible for the recognition (via the A domain) and incorporation of a single amino acid into the growing peptide product. Thus, an NRP synthetase is generally composed of one or more modules and can terminate in a thioesterase domain (TE) that releases the newly synthesized peptide from the enzyme. Occasionally, epimerase (E) domains (responsible for L- to D-amino acid conversion) are present within the NRP synthetase (By similarity). NotE has the following architecture: A1-T1-C1-A2-T2-C2. The presence of two intact modules suggests that the two modules condense L-tryptophan and L-phenylalanine together. The C-terminal condensation domain might be responsible for cyclization of the dipeptide to form the diketopiperazine structure (Probable).</text>
</comment>
<comment type="biotechnology">
    <text evidence="5">Notoamides have been shown to exhibit antitumoral activities (PubMed:17304611). Notoamides A-C show moderate cytotoxicity against HeLa and L1210 cells with IC(50) values in the range of 22-52 mg/ml, but the IC(50) value of notoamide D is greater than 100 mg/ml (PubMed:17304611). Moreover, notoamide C induces G2/M-cell cycle arrest at a concentration of 6.3 mg/ml (PubMed:17304611).</text>
</comment>
<comment type="similarity">
    <text evidence="9">Belongs to the NRP synthetase family.</text>
</comment>
<reference key="1">
    <citation type="journal article" date="2012" name="Med. Chem. Commun.">
        <title>Comparative analysis of the biosynthetic systems for fungal bicyclo[2.2.2]diazaoctane indole alkaloids: the (+)/(-)-notoamide, paraherquamide and malbrancheamide pathways.</title>
        <authorList>
            <person name="Li S."/>
            <person name="Anand K."/>
            <person name="Tran H."/>
            <person name="Yu F."/>
            <person name="Finefield J.M."/>
            <person name="Sunderhaus J.D."/>
            <person name="McAfoos T.J."/>
            <person name="Tsukamoto S."/>
            <person name="Williams R.M."/>
            <person name="Sherman D.H."/>
        </authorList>
    </citation>
    <scope>NUCLEOTIDE SEQUENCE [GENOMIC DNA]</scope>
    <scope>FUNCTION</scope>
    <scope>DOMAIN</scope>
    <scope>PATHWAY</scope>
    <source>
        <strain>NRRL 35600</strain>
    </source>
</reference>
<reference key="2">
    <citation type="journal article" date="2007" name="Angew. Chem. Int. Ed.">
        <title>Notoamides A-D: prenylated indole alkaloids isolated from a marine-derived fungus, Aspergillus sp.</title>
        <authorList>
            <person name="Kato H."/>
            <person name="Yoshida T."/>
            <person name="Tokue T."/>
            <person name="Nojiri Y."/>
            <person name="Hirota H."/>
            <person name="Ohta T."/>
            <person name="Williams R.M."/>
            <person name="Tsukamoto S."/>
        </authorList>
    </citation>
    <scope>BIOTECHNOLOGY</scope>
</reference>
<reference key="3">
    <citation type="journal article" date="2013" name="Appl. Microbiol. Biotechnol.">
        <title>Identification of a brevianamide F reverse prenyltransferase BrePT from Aspergillus versicolor with a broad substrate specificity towards tryptophan-containing cyclic dipeptides.</title>
        <authorList>
            <person name="Yin S."/>
            <person name="Yu X."/>
            <person name="Wang Q."/>
            <person name="Liu X.Q."/>
            <person name="Li S.M."/>
        </authorList>
    </citation>
    <scope>FUNCTION</scope>
</reference>
<gene>
    <name evidence="8" type="primary">notE'</name>
</gene>
<sequence>MDSTQITESNRECSVLQGKLATETVRESLSSSPSPLPSLASPVSSGSEPPAFGETQPQSRDSTLLFNAQVPEFWETCVHDVIQERCKEAPQSTAVAAWDGSFTYGELDDLSNRLASALTLLGVKAETFVPICMEKSRWATVAVLGVMKAGGAFTLLDASYPLPRLKTICQELSSLVVLSSTAQSERCTQLANMIVVEHLCRAWHPVAHTTQSPATVCPSNALYVSFTSGSTGRPKGVLIEHRAYSSGAREHLKAFRIDQTSRVLQFSSYAFDVSIMETLSTLMAGGCLCVLGDAQRSDVCLFAAAVDEFQVSHALLTPSFARTVPWENVRHLQTLVLGGEEMRVSDAAMCVERGVRLINAYGTAECSVNATARPGVQPGDNLSTIGHPTGAVAWLIDPDDPETPIGPGMEGELLLEGPIVGRGYLNNPAATAAAFIGPPKWLQQLRKTDYQHQLYRTGDLAVQDSTGALMLLGRRDGQLKIRGQRVEVAEIEQHIDRVLAAVKEVIVEKVTPECEQREILMAFVQTGATSQAWTEGSPLFLPPGPTSVQEFRTAQSQLRGQLPSYMVPTIFIGVAAVPRTASGKMDRRLLRVTAGRLSREELQAFTGSPVDSRSPTTATELMLQRLYAEVLELPTTSISMEDSFVRLGGDSIMAVRLLGAARRAGLVLDIGDVLGTARLEEQAQRATPMTEGTACETYIPFSALGSRYMNREEVLRLAAEQCGTSLSEIEDIYPCTPLQEGMLALASSQTWMYVGHIVFGLPEGVDVSRFKAAWQSTADTTPILRTRIIETPQGLLQVVLRGSLVWETYNEPPDACVADGGSQIGSPGAPLMRFALGDGDHRDEFVLTVHHAVWDAWSMRLIHDAVERSFQGEQVKKQPFHPFIQHLQQVDGGMDEFWRTELANLEAVPFPALPSTHYRPSPTAMLRHTVEKIEICAPRSHTMASYIHLAWSLLVAHYTDSTEAVYGATMSGRNAPVEAINELAGPTIATVPVRVHVRPEDTISAALEQIQSCMVRMVPHEQAGLLRIAKTSSDAARACAFQSHLNIQVVEPERRLFPVRRGIASTGMDLTRFSSYALNLMLLLSPDNTSVIVNIAYDPQVLSAWEVYRMIHQWEHILRQVCREPTGSLQELDLASPLDQDLLRVWNAKTPAVDRRCLHDLVLAQAMQQPSRQAVSAWDGGFTYGELAHLSSNFARLLSLFAVGRGSFVPICMDKSRWAVVSILAVLQAGATCVLLDPQYPRQRMKDIITGLSVPVLVNAPSTAPVTRGLSAIQLCVSAKFTEQLWTSNPSGSHFQAHVDPDDLAFVIFTSGSTGAPKGIAMPHSTISSSIRHNSAAMRFDADTRTLHFSSYAFDVSIYEIFTTLASGGCVCVPSEFQRTNELADFIQQWRVNWAFLTPSTAQSLHPSEVPGLATLVLGGEAVTPDHVEVWAPGRTLINGYGPAEATICAVGPLPEHGWVPGKIGHVVGGVGWVTVPSDPNRLAAIGAIGELLLEGPFLARGYLNQHEATAASFITPPPWRRKLLPGCDADTTRLYRTGDLVRYQEDGSLRYIGRRDTQVKVRGQRIDLGEIETQLHRSFPGAHDVVAETVQLPVLQDRTVLVAFIGRQEGLVMESALGEEVVAAVDAGFQQAVSSAQARLQDILPSYMLPSVFLPLAHCPKTLTGKTDRRYLRQVVLGLEPHELQRYRVASRQKTRIPVSHGAELRLQSIWADLLHIPCDEIGAEDTFLLHGGDSVAAMRMVALARRADFTFRVTDVLNNCTLSDLARCTGEEQCLAAETLPTVHDVESDDQVVASQTDSDAIAVYPTTQAQSFLIQRYPWTHWRFAFHGEVSIDRLRTACARLVAAHSILRTLFVGGKGQRDRQVVMKALDIPLHTVTTNKSLEEYCQSICDAEQQMDVVETVLPTRLTLVSDVLHTAHIFVLRLSHAQYDGICVPKIFAGLESFYNRTETVAPTIFERYLDQRQRFEGEGPHEFWRAYLAGSSPPCTMPGKSTPPTTADSGPVAPPSVISASQTVKFTAIPSQVTLATVVKAAACLVLARLTGRSDITVGQTVNGRSLPLPWVNEVVGPCVNYIPFRATLQQSMSTQDYLVDMQRQHNRCVPFDGAELDTIVKNCTDWEPTAEFGFILQHQNIDMDLSLTLDGNRCVSCASSGQLRPSNEVWICSTPSPSGVDLDVVASSHILTADAAKNLVDDIADMIQTLLYNLETPLRDAVELNWSDGS</sequence>
<evidence type="ECO:0000250" key="1">
    <source>
        <dbReference type="UniProtKB" id="Q4WMJ7"/>
    </source>
</evidence>
<evidence type="ECO:0000255" key="2"/>
<evidence type="ECO:0000255" key="3">
    <source>
        <dbReference type="PROSITE-ProRule" id="PRU00258"/>
    </source>
</evidence>
<evidence type="ECO:0000256" key="4">
    <source>
        <dbReference type="SAM" id="MobiDB-lite"/>
    </source>
</evidence>
<evidence type="ECO:0000269" key="5">
    <source>
    </source>
</evidence>
<evidence type="ECO:0000269" key="6">
    <source>
    </source>
</evidence>
<evidence type="ECO:0000269" key="7">
    <source>
    </source>
</evidence>
<evidence type="ECO:0000303" key="8">
    <source>
    </source>
</evidence>
<evidence type="ECO:0000305" key="9"/>
<evidence type="ECO:0000305" key="10">
    <source>
    </source>
</evidence>
<name>NOTE_ASPVE</name>
<proteinExistence type="evidence at protein level"/>
<dbReference type="EC" id="6.3.1.-" evidence="10"/>
<dbReference type="EMBL" id="JQ708194">
    <property type="protein sequence ID" value="AGC83576.1"/>
    <property type="molecule type" value="Genomic_DNA"/>
</dbReference>
<dbReference type="SMR" id="L7WU80"/>
<dbReference type="VEuPathDB" id="FungiDB:ASPVEDRAFT_89486"/>
<dbReference type="GO" id="GO:0005737">
    <property type="term" value="C:cytoplasm"/>
    <property type="evidence" value="ECO:0007669"/>
    <property type="project" value="TreeGrafter"/>
</dbReference>
<dbReference type="GO" id="GO:0016874">
    <property type="term" value="F:ligase activity"/>
    <property type="evidence" value="ECO:0007669"/>
    <property type="project" value="UniProtKB-KW"/>
</dbReference>
<dbReference type="GO" id="GO:0031177">
    <property type="term" value="F:phosphopantetheine binding"/>
    <property type="evidence" value="ECO:0007669"/>
    <property type="project" value="TreeGrafter"/>
</dbReference>
<dbReference type="GO" id="GO:0009820">
    <property type="term" value="P:alkaloid metabolic process"/>
    <property type="evidence" value="ECO:0007669"/>
    <property type="project" value="UniProtKB-KW"/>
</dbReference>
<dbReference type="GO" id="GO:0043041">
    <property type="term" value="P:amino acid activation for nonribosomal peptide biosynthetic process"/>
    <property type="evidence" value="ECO:0007669"/>
    <property type="project" value="TreeGrafter"/>
</dbReference>
<dbReference type="GO" id="GO:0044550">
    <property type="term" value="P:secondary metabolite biosynthetic process"/>
    <property type="evidence" value="ECO:0007669"/>
    <property type="project" value="TreeGrafter"/>
</dbReference>
<dbReference type="CDD" id="cd05918">
    <property type="entry name" value="A_NRPS_SidN3_like"/>
    <property type="match status" value="2"/>
</dbReference>
<dbReference type="CDD" id="cd19542">
    <property type="entry name" value="CT_NRPS-like"/>
    <property type="match status" value="1"/>
</dbReference>
<dbReference type="CDD" id="cd19545">
    <property type="entry name" value="FUM14_C_NRPS-like"/>
    <property type="match status" value="1"/>
</dbReference>
<dbReference type="FunFam" id="3.30.300.30:FF:000015">
    <property type="entry name" value="Nonribosomal peptide synthase SidD"/>
    <property type="match status" value="2"/>
</dbReference>
<dbReference type="FunFam" id="3.30.559.30:FF:000003">
    <property type="entry name" value="Nonribosomal peptide synthase SidD"/>
    <property type="match status" value="1"/>
</dbReference>
<dbReference type="FunFam" id="3.40.50.12780:FF:000014">
    <property type="entry name" value="Nonribosomal peptide synthetase 1"/>
    <property type="match status" value="2"/>
</dbReference>
<dbReference type="Gene3D" id="3.30.300.30">
    <property type="match status" value="2"/>
</dbReference>
<dbReference type="Gene3D" id="1.10.1200.10">
    <property type="entry name" value="ACP-like"/>
    <property type="match status" value="2"/>
</dbReference>
<dbReference type="Gene3D" id="3.30.559.10">
    <property type="entry name" value="Chloramphenicol acetyltransferase-like domain"/>
    <property type="match status" value="2"/>
</dbReference>
<dbReference type="Gene3D" id="3.40.50.12780">
    <property type="entry name" value="N-terminal domain of ligase-like"/>
    <property type="match status" value="2"/>
</dbReference>
<dbReference type="Gene3D" id="3.30.559.30">
    <property type="entry name" value="Nonribosomal peptide synthetase, condensation domain"/>
    <property type="match status" value="2"/>
</dbReference>
<dbReference type="InterPro" id="IPR010071">
    <property type="entry name" value="AA_adenyl_dom"/>
</dbReference>
<dbReference type="InterPro" id="IPR036736">
    <property type="entry name" value="ACP-like_sf"/>
</dbReference>
<dbReference type="InterPro" id="IPR045851">
    <property type="entry name" value="AMP-bd_C_sf"/>
</dbReference>
<dbReference type="InterPro" id="IPR020845">
    <property type="entry name" value="AMP-binding_CS"/>
</dbReference>
<dbReference type="InterPro" id="IPR000873">
    <property type="entry name" value="AMP-dep_synth/lig_dom"/>
</dbReference>
<dbReference type="InterPro" id="IPR042099">
    <property type="entry name" value="ANL_N_sf"/>
</dbReference>
<dbReference type="InterPro" id="IPR023213">
    <property type="entry name" value="CAT-like_dom_sf"/>
</dbReference>
<dbReference type="InterPro" id="IPR001242">
    <property type="entry name" value="Condensatn"/>
</dbReference>
<dbReference type="InterPro" id="IPR009081">
    <property type="entry name" value="PP-bd_ACP"/>
</dbReference>
<dbReference type="InterPro" id="IPR006162">
    <property type="entry name" value="Ppantetheine_attach_site"/>
</dbReference>
<dbReference type="NCBIfam" id="TIGR01733">
    <property type="entry name" value="AA-adenyl-dom"/>
    <property type="match status" value="2"/>
</dbReference>
<dbReference type="PANTHER" id="PTHR45527">
    <property type="entry name" value="NONRIBOSOMAL PEPTIDE SYNTHETASE"/>
    <property type="match status" value="1"/>
</dbReference>
<dbReference type="PANTHER" id="PTHR45527:SF3">
    <property type="entry name" value="SIDEROPHORE SYNTHETASE (EUROFUNG)"/>
    <property type="match status" value="1"/>
</dbReference>
<dbReference type="Pfam" id="PF00501">
    <property type="entry name" value="AMP-binding"/>
    <property type="match status" value="2"/>
</dbReference>
<dbReference type="Pfam" id="PF00668">
    <property type="entry name" value="Condensation"/>
    <property type="match status" value="2"/>
</dbReference>
<dbReference type="Pfam" id="PF00550">
    <property type="entry name" value="PP-binding"/>
    <property type="match status" value="2"/>
</dbReference>
<dbReference type="SUPFAM" id="SSF56801">
    <property type="entry name" value="Acetyl-CoA synthetase-like"/>
    <property type="match status" value="2"/>
</dbReference>
<dbReference type="SUPFAM" id="SSF47336">
    <property type="entry name" value="ACP-like"/>
    <property type="match status" value="2"/>
</dbReference>
<dbReference type="SUPFAM" id="SSF52777">
    <property type="entry name" value="CoA-dependent acyltransferases"/>
    <property type="match status" value="4"/>
</dbReference>
<dbReference type="PROSITE" id="PS00455">
    <property type="entry name" value="AMP_BINDING"/>
    <property type="match status" value="2"/>
</dbReference>
<dbReference type="PROSITE" id="PS50075">
    <property type="entry name" value="CARRIER"/>
    <property type="match status" value="2"/>
</dbReference>
<dbReference type="PROSITE" id="PS00012">
    <property type="entry name" value="PHOSPHOPANTETHEINE"/>
    <property type="match status" value="1"/>
</dbReference>
<organism>
    <name type="scientific">Aspergillus versicolor</name>
    <dbReference type="NCBI Taxonomy" id="46472"/>
    <lineage>
        <taxon>Eukaryota</taxon>
        <taxon>Fungi</taxon>
        <taxon>Dikarya</taxon>
        <taxon>Ascomycota</taxon>
        <taxon>Pezizomycotina</taxon>
        <taxon>Eurotiomycetes</taxon>
        <taxon>Eurotiomycetidae</taxon>
        <taxon>Eurotiales</taxon>
        <taxon>Aspergillaceae</taxon>
        <taxon>Aspergillus</taxon>
        <taxon>Aspergillus subgen. Nidulantes</taxon>
    </lineage>
</organism>
<protein>
    <recommendedName>
        <fullName evidence="8">Nonribisomal peptide synthetase notE'</fullName>
        <shortName evidence="8">NRPS notE'</shortName>
        <ecNumber evidence="10">6.3.1.-</ecNumber>
    </recommendedName>
    <alternativeName>
        <fullName evidence="8">Notoamide biosynthesis cluster protein E'</fullName>
    </alternativeName>
</protein>